<dbReference type="EC" id="2.3.2.27"/>
<dbReference type="EMBL" id="AK015745">
    <property type="protein sequence ID" value="BAB29953.1"/>
    <property type="molecule type" value="mRNA"/>
</dbReference>
<dbReference type="EMBL" id="AK020527">
    <property type="protein sequence ID" value="BAB32125.1"/>
    <property type="molecule type" value="mRNA"/>
</dbReference>
<dbReference type="EMBL" id="AK028551">
    <property type="protein sequence ID" value="BAC26004.1"/>
    <property type="molecule type" value="mRNA"/>
</dbReference>
<dbReference type="EMBL" id="AK030558">
    <property type="protein sequence ID" value="BAC27020.1"/>
    <property type="molecule type" value="mRNA"/>
</dbReference>
<dbReference type="EMBL" id="AK031657">
    <property type="protein sequence ID" value="BAC27496.1"/>
    <property type="status" value="ALT_SEQ"/>
    <property type="molecule type" value="mRNA"/>
</dbReference>
<dbReference type="EMBL" id="AK032848">
    <property type="protein sequence ID" value="BAC28054.1"/>
    <property type="molecule type" value="mRNA"/>
</dbReference>
<dbReference type="EMBL" id="AK034551">
    <property type="protein sequence ID" value="BAC28750.1"/>
    <property type="molecule type" value="mRNA"/>
</dbReference>
<dbReference type="EMBL" id="AK044103">
    <property type="protein sequence ID" value="BAC31779.1"/>
    <property type="status" value="ALT_SEQ"/>
    <property type="molecule type" value="mRNA"/>
</dbReference>
<dbReference type="EMBL" id="AK077466">
    <property type="protein sequence ID" value="BAC36813.1"/>
    <property type="molecule type" value="mRNA"/>
</dbReference>
<dbReference type="EMBL" id="BC019415">
    <property type="protein sequence ID" value="AAH19415.1"/>
    <property type="status" value="ALT_INIT"/>
    <property type="molecule type" value="mRNA"/>
</dbReference>
<dbReference type="EMBL" id="BC049078">
    <property type="protein sequence ID" value="AAH49078.1"/>
    <property type="molecule type" value="mRNA"/>
</dbReference>
<dbReference type="CCDS" id="CCDS24277.1">
    <molecule id="Q8BH75-1"/>
</dbReference>
<dbReference type="RefSeq" id="NP_001157709.1">
    <molecule id="Q8BH75-1"/>
    <property type="nucleotide sequence ID" value="NM_001164237.1"/>
</dbReference>
<dbReference type="RefSeq" id="NP_080535.2">
    <molecule id="Q8BH75-1"/>
    <property type="nucleotide sequence ID" value="NM_026259.3"/>
</dbReference>
<dbReference type="PDB" id="2OGB">
    <property type="method" value="X-ray"/>
    <property type="resolution" value="1.95 A"/>
    <property type="chains" value="A/B=193-317"/>
</dbReference>
<dbReference type="PDBsum" id="2OGB"/>
<dbReference type="SMR" id="Q8BH75"/>
<dbReference type="BioGRID" id="212296">
    <property type="interactions" value="29"/>
</dbReference>
<dbReference type="FunCoup" id="Q8BH75">
    <property type="interactions" value="2562"/>
</dbReference>
<dbReference type="IntAct" id="Q8BH75">
    <property type="interactions" value="4"/>
</dbReference>
<dbReference type="MINT" id="Q8BH75"/>
<dbReference type="STRING" id="10090.ENSMUSP00000132751"/>
<dbReference type="MoonDB" id="Q8BH75">
    <property type="type" value="Predicted"/>
</dbReference>
<dbReference type="iPTMnet" id="Q8BH75"/>
<dbReference type="PhosphoSitePlus" id="Q8BH75"/>
<dbReference type="PaxDb" id="10090-ENSMUSP00000100869"/>
<dbReference type="ProteomicsDB" id="300502">
    <molecule id="Q8BH75-1"/>
</dbReference>
<dbReference type="Pumba" id="Q8BH75"/>
<dbReference type="Antibodypedia" id="15762">
    <property type="antibodies" value="201 antibodies from 31 providers"/>
</dbReference>
<dbReference type="DNASU" id="67588"/>
<dbReference type="Ensembl" id="ENSMUST00000096386.13">
    <molecule id="Q8BH75-1"/>
    <property type="protein sequence ID" value="ENSMUSP00000100869.4"/>
    <property type="gene ID" value="ENSMUSG00000025373.15"/>
</dbReference>
<dbReference type="Ensembl" id="ENSMUST00000171342.3">
    <molecule id="Q8BH75-1"/>
    <property type="protein sequence ID" value="ENSMUSP00000132751.2"/>
    <property type="gene ID" value="ENSMUSG00000025373.15"/>
</dbReference>
<dbReference type="Ensembl" id="ENSMUST00000217826.2">
    <molecule id="Q8BH75-2"/>
    <property type="protein sequence ID" value="ENSMUSP00000151260.2"/>
    <property type="gene ID" value="ENSMUSG00000025373.15"/>
</dbReference>
<dbReference type="GeneID" id="67588"/>
<dbReference type="KEGG" id="mmu:67588"/>
<dbReference type="UCSC" id="uc007hmr.2">
    <molecule id="Q8BH75-1"/>
    <property type="organism name" value="mouse"/>
</dbReference>
<dbReference type="AGR" id="MGI:1914838"/>
<dbReference type="CTD" id="10193"/>
<dbReference type="MGI" id="MGI:1914838">
    <property type="gene designation" value="Rnf41"/>
</dbReference>
<dbReference type="VEuPathDB" id="HostDB:ENSMUSG00000025373"/>
<dbReference type="eggNOG" id="KOG0297">
    <property type="taxonomic scope" value="Eukaryota"/>
</dbReference>
<dbReference type="GeneTree" id="ENSGT00530000063647"/>
<dbReference type="HOGENOM" id="CLU_076732_0_0_1"/>
<dbReference type="InParanoid" id="Q8BH75"/>
<dbReference type="OMA" id="PTHNCIK"/>
<dbReference type="OrthoDB" id="1630758at2759"/>
<dbReference type="PhylomeDB" id="Q8BH75"/>
<dbReference type="TreeFam" id="TF351947"/>
<dbReference type="Reactome" id="R-MMU-1358803">
    <property type="pathway name" value="Downregulation of ERBB2:ERBB3 signaling"/>
</dbReference>
<dbReference type="Reactome" id="R-MMU-983168">
    <property type="pathway name" value="Antigen processing: Ubiquitination &amp; Proteasome degradation"/>
</dbReference>
<dbReference type="UniPathway" id="UPA00143"/>
<dbReference type="BioGRID-ORCS" id="67588">
    <property type="hits" value="3 hits in 78 CRISPR screens"/>
</dbReference>
<dbReference type="ChiTaRS" id="Rnf41">
    <property type="organism name" value="mouse"/>
</dbReference>
<dbReference type="EvolutionaryTrace" id="Q8BH75"/>
<dbReference type="PRO" id="PR:Q8BH75"/>
<dbReference type="Proteomes" id="UP000000589">
    <property type="component" value="Chromosome 10"/>
</dbReference>
<dbReference type="RNAct" id="Q8BH75">
    <property type="molecule type" value="protein"/>
</dbReference>
<dbReference type="Bgee" id="ENSMUSG00000025373">
    <property type="expression patterns" value="Expressed in cortical plate and 245 other cell types or tissues"/>
</dbReference>
<dbReference type="ExpressionAtlas" id="Q8BH75">
    <property type="expression patterns" value="baseline and differential"/>
</dbReference>
<dbReference type="GO" id="GO:0071782">
    <property type="term" value="C:endoplasmic reticulum tubular network"/>
    <property type="evidence" value="ECO:0007669"/>
    <property type="project" value="Ensembl"/>
</dbReference>
<dbReference type="GO" id="GO:0048471">
    <property type="term" value="C:perinuclear region of cytoplasm"/>
    <property type="evidence" value="ECO:0007669"/>
    <property type="project" value="Ensembl"/>
</dbReference>
<dbReference type="GO" id="GO:0005128">
    <property type="term" value="F:erythropoietin receptor binding"/>
    <property type="evidence" value="ECO:0000314"/>
    <property type="project" value="MGI"/>
</dbReference>
<dbReference type="GO" id="GO:0042802">
    <property type="term" value="F:identical protein binding"/>
    <property type="evidence" value="ECO:0007669"/>
    <property type="project" value="Ensembl"/>
</dbReference>
<dbReference type="GO" id="GO:0005135">
    <property type="term" value="F:interleukin-3 receptor binding"/>
    <property type="evidence" value="ECO:0000314"/>
    <property type="project" value="MGI"/>
</dbReference>
<dbReference type="GO" id="GO:0019904">
    <property type="term" value="F:protein domain specific binding"/>
    <property type="evidence" value="ECO:0007669"/>
    <property type="project" value="Ensembl"/>
</dbReference>
<dbReference type="GO" id="GO:0030971">
    <property type="term" value="F:receptor tyrosine kinase binding"/>
    <property type="evidence" value="ECO:0007669"/>
    <property type="project" value="Ensembl"/>
</dbReference>
<dbReference type="GO" id="GO:0031267">
    <property type="term" value="F:small GTPase binding"/>
    <property type="evidence" value="ECO:0007669"/>
    <property type="project" value="Ensembl"/>
</dbReference>
<dbReference type="GO" id="GO:0061630">
    <property type="term" value="F:ubiquitin protein ligase activity"/>
    <property type="evidence" value="ECO:0007669"/>
    <property type="project" value="Ensembl"/>
</dbReference>
<dbReference type="GO" id="GO:0004842">
    <property type="term" value="F:ubiquitin-protein transferase activity"/>
    <property type="evidence" value="ECO:0000250"/>
    <property type="project" value="UniProtKB"/>
</dbReference>
<dbReference type="GO" id="GO:0008270">
    <property type="term" value="F:zinc ion binding"/>
    <property type="evidence" value="ECO:0007669"/>
    <property type="project" value="UniProtKB-KW"/>
</dbReference>
<dbReference type="GO" id="GO:0006914">
    <property type="term" value="P:autophagy"/>
    <property type="evidence" value="ECO:0007669"/>
    <property type="project" value="UniProtKB-KW"/>
</dbReference>
<dbReference type="GO" id="GO:0097191">
    <property type="term" value="P:extrinsic apoptotic signaling pathway"/>
    <property type="evidence" value="ECO:0000250"/>
    <property type="project" value="UniProtKB"/>
</dbReference>
<dbReference type="GO" id="GO:0030336">
    <property type="term" value="P:negative regulation of cell migration"/>
    <property type="evidence" value="ECO:0000266"/>
    <property type="project" value="MGI"/>
</dbReference>
<dbReference type="GO" id="GO:0008285">
    <property type="term" value="P:negative regulation of cell population proliferation"/>
    <property type="evidence" value="ECO:0000266"/>
    <property type="project" value="MGI"/>
</dbReference>
<dbReference type="GO" id="GO:1901525">
    <property type="term" value="P:negative regulation of mitophagy"/>
    <property type="evidence" value="ECO:0000316"/>
    <property type="project" value="MGI"/>
</dbReference>
<dbReference type="GO" id="GO:0045732">
    <property type="term" value="P:positive regulation of protein catabolic process"/>
    <property type="evidence" value="ECO:0007669"/>
    <property type="project" value="Ensembl"/>
</dbReference>
<dbReference type="GO" id="GO:2000379">
    <property type="term" value="P:positive regulation of reactive oxygen species metabolic process"/>
    <property type="evidence" value="ECO:0007669"/>
    <property type="project" value="Ensembl"/>
</dbReference>
<dbReference type="GO" id="GO:0010498">
    <property type="term" value="P:proteasomal protein catabolic process"/>
    <property type="evidence" value="ECO:0007669"/>
    <property type="project" value="Ensembl"/>
</dbReference>
<dbReference type="GO" id="GO:0051865">
    <property type="term" value="P:protein autoubiquitination"/>
    <property type="evidence" value="ECO:0007669"/>
    <property type="project" value="Ensembl"/>
</dbReference>
<dbReference type="GO" id="GO:0000209">
    <property type="term" value="P:protein polyubiquitination"/>
    <property type="evidence" value="ECO:0000314"/>
    <property type="project" value="MGI"/>
</dbReference>
<dbReference type="GO" id="GO:0045619">
    <property type="term" value="P:regulation of lymphocyte differentiation"/>
    <property type="evidence" value="ECO:0000314"/>
    <property type="project" value="MGI"/>
</dbReference>
<dbReference type="GO" id="GO:0043408">
    <property type="term" value="P:regulation of MAPK cascade"/>
    <property type="evidence" value="ECO:0000266"/>
    <property type="project" value="MGI"/>
</dbReference>
<dbReference type="GO" id="GO:0045637">
    <property type="term" value="P:regulation of myeloid cell differentiation"/>
    <property type="evidence" value="ECO:0000314"/>
    <property type="project" value="MGI"/>
</dbReference>
<dbReference type="GO" id="GO:0051896">
    <property type="term" value="P:regulation of phosphatidylinositol 3-kinase/protein kinase B signal transduction"/>
    <property type="evidence" value="ECO:0000266"/>
    <property type="project" value="MGI"/>
</dbReference>
<dbReference type="CDD" id="cd16634">
    <property type="entry name" value="mRING-HC-C3HC3D_Nrdp1"/>
    <property type="match status" value="1"/>
</dbReference>
<dbReference type="FunFam" id="3.30.40.10:FF:000268">
    <property type="entry name" value="E3 ubiquitin-protein ligase NRDP1"/>
    <property type="match status" value="1"/>
</dbReference>
<dbReference type="FunFam" id="3.30.40.10:FF:000302">
    <property type="entry name" value="E3 ubiquitin-protein ligase NRDP1"/>
    <property type="match status" value="1"/>
</dbReference>
<dbReference type="Gene3D" id="3.30.40.10">
    <property type="entry name" value="Zinc/RING finger domain, C3HC4 (zinc finger)"/>
    <property type="match status" value="2"/>
</dbReference>
<dbReference type="InterPro" id="IPR015036">
    <property type="entry name" value="NRDP1"/>
</dbReference>
<dbReference type="InterPro" id="IPR037255">
    <property type="entry name" value="NRDP1_C"/>
</dbReference>
<dbReference type="InterPro" id="IPR001841">
    <property type="entry name" value="Znf_RING"/>
</dbReference>
<dbReference type="InterPro" id="IPR013083">
    <property type="entry name" value="Znf_RING/FYVE/PHD"/>
</dbReference>
<dbReference type="InterPro" id="IPR017907">
    <property type="entry name" value="Znf_RING_CS"/>
</dbReference>
<dbReference type="InterPro" id="IPR013010">
    <property type="entry name" value="Znf_SIAH"/>
</dbReference>
<dbReference type="PANTHER" id="PTHR10131:SF157">
    <property type="entry name" value="RECEPTOR-ASSOCIATED FACTOR, PUTATIVE-RELATED"/>
    <property type="match status" value="1"/>
</dbReference>
<dbReference type="PANTHER" id="PTHR10131">
    <property type="entry name" value="TNF RECEPTOR ASSOCIATED FACTOR"/>
    <property type="match status" value="1"/>
</dbReference>
<dbReference type="Pfam" id="PF08941">
    <property type="entry name" value="USP8_interact"/>
    <property type="match status" value="1"/>
</dbReference>
<dbReference type="Pfam" id="PF13923">
    <property type="entry name" value="zf-C3HC4_2"/>
    <property type="match status" value="1"/>
</dbReference>
<dbReference type="SMART" id="SM00184">
    <property type="entry name" value="RING"/>
    <property type="match status" value="1"/>
</dbReference>
<dbReference type="SUPFAM" id="SSF160088">
    <property type="entry name" value="NRDP1 C-terminal domain-like"/>
    <property type="match status" value="1"/>
</dbReference>
<dbReference type="SUPFAM" id="SSF57850">
    <property type="entry name" value="RING/U-box"/>
    <property type="match status" value="1"/>
</dbReference>
<dbReference type="SUPFAM" id="SSF49599">
    <property type="entry name" value="TRAF domain-like"/>
    <property type="match status" value="1"/>
</dbReference>
<dbReference type="PROSITE" id="PS00518">
    <property type="entry name" value="ZF_RING_1"/>
    <property type="match status" value="1"/>
</dbReference>
<dbReference type="PROSITE" id="PS50089">
    <property type="entry name" value="ZF_RING_2"/>
    <property type="match status" value="1"/>
</dbReference>
<dbReference type="PROSITE" id="PS51081">
    <property type="entry name" value="ZF_SIAH"/>
    <property type="match status" value="1"/>
</dbReference>
<feature type="chain" id="PRO_0000223955" description="E3 ubiquitin-protein ligase NRDP1">
    <location>
        <begin position="1"/>
        <end position="317"/>
    </location>
</feature>
<feature type="zinc finger region" description="RING-type; degenerate" evidence="2">
    <location>
        <begin position="18"/>
        <end position="57"/>
    </location>
</feature>
<feature type="zinc finger region" description="SIAH-type; degenerate" evidence="3">
    <location>
        <begin position="78"/>
        <end position="138"/>
    </location>
</feature>
<feature type="splice variant" id="VSP_058649" description="In isoform 2." evidence="8">
    <original>APHCEH</original>
    <variation>PGDAQR</variation>
    <location>
        <begin position="31"/>
        <end position="36"/>
    </location>
</feature>
<feature type="splice variant" id="VSP_058650" description="In isoform 2." evidence="8">
    <location>
        <begin position="37"/>
        <end position="317"/>
    </location>
</feature>
<feature type="sequence conflict" description="In Ref. 1; BAC31779." evidence="9" ref="1">
    <original>R</original>
    <variation>H</variation>
    <location>
        <position position="7"/>
    </location>
</feature>
<feature type="sequence conflict" description="In Ref. 2; AAH19415." evidence="9" ref="2">
    <original>S</original>
    <variation>T</variation>
    <location>
        <position position="104"/>
    </location>
</feature>
<feature type="sequence conflict" description="In Ref. 2; AAH19415." evidence="9" ref="2">
    <original>S</original>
    <variation>R</variation>
    <location>
        <position position="156"/>
    </location>
</feature>
<feature type="sequence conflict" description="In Ref. 1; BAC28054." evidence="9" ref="1">
    <original>R</original>
    <variation>Q</variation>
    <location>
        <position position="178"/>
    </location>
</feature>
<feature type="sequence conflict" description="In Ref. 1; BAB29953." evidence="9" ref="1">
    <original>K</original>
    <variation>E</variation>
    <location>
        <position position="278"/>
    </location>
</feature>
<feature type="helix" evidence="10">
    <location>
        <begin position="196"/>
        <end position="205"/>
    </location>
</feature>
<feature type="strand" evidence="10">
    <location>
        <begin position="208"/>
        <end position="212"/>
    </location>
</feature>
<feature type="helix" evidence="10">
    <location>
        <begin position="214"/>
        <end position="216"/>
    </location>
</feature>
<feature type="helix" evidence="10">
    <location>
        <begin position="223"/>
        <end position="235"/>
    </location>
</feature>
<feature type="helix" evidence="10">
    <location>
        <begin position="240"/>
        <end position="248"/>
    </location>
</feature>
<feature type="helix" evidence="10">
    <location>
        <begin position="252"/>
        <end position="254"/>
    </location>
</feature>
<feature type="turn" evidence="10">
    <location>
        <begin position="257"/>
        <end position="259"/>
    </location>
</feature>
<feature type="helix" evidence="10">
    <location>
        <begin position="262"/>
        <end position="267"/>
    </location>
</feature>
<feature type="helix" evidence="10">
    <location>
        <begin position="269"/>
        <end position="272"/>
    </location>
</feature>
<feature type="strand" evidence="10">
    <location>
        <begin position="283"/>
        <end position="289"/>
    </location>
</feature>
<feature type="helix" evidence="10">
    <location>
        <begin position="290"/>
        <end position="292"/>
    </location>
</feature>
<feature type="turn" evidence="10">
    <location>
        <begin position="298"/>
        <end position="300"/>
    </location>
</feature>
<feature type="strand" evidence="10">
    <location>
        <begin position="303"/>
        <end position="312"/>
    </location>
</feature>
<feature type="strand" evidence="10">
    <location>
        <begin position="314"/>
        <end position="316"/>
    </location>
</feature>
<protein>
    <recommendedName>
        <fullName>E3 ubiquitin-protein ligase NRDP1</fullName>
        <ecNumber>2.3.2.27</ecNumber>
    </recommendedName>
    <alternativeName>
        <fullName>RING finger protein 41</fullName>
    </alternativeName>
    <alternativeName>
        <fullName evidence="9">RING-type E3 ubiquitin transferase NRDP1</fullName>
    </alternativeName>
</protein>
<comment type="function">
    <text evidence="1 5 6 7">Acts as E3 ubiquitin-protein ligase and regulates the degradation of target proteins. Polyubiquitinates MYD88 (By similarity). Negatively regulates MYD88-dependent production of pro-inflammatory cytokines. Can promote TRIF-dependent production of type I interferon and inhibits infection with vesicular stomatitis virus. Also promotes activation of TBK1 and IRF3 (PubMed:19483718). Involved in the ubiquitination of erythropoietin (EPO) and interleukin-3 (IL-3) receptors. Thus, through maintaining basal levels of cytokine receptors, RNF41 is involved in the control of hematopoietic progenitor cell differentiation into myeloerythroid lineages (PubMed:18495327). Contributes to the maintenance of steady-state ERBB3 levels by mediating its growth factor-independent degradation. Involved in the degradation of the inhibitor of apoptosis BIRC6 and thus is an important regulator of cell death by promoting apoptosis. Also acts as a PRKN modifier that accelerates its degradation, resulting in a reduction of PRKN activity, influencing the balance of intracellular redox state. The RNF41-PRKN pathway regulates autophagosome-lysosome fusion during late mitophagy. Mitophagy is a selective form of autophagy necessary for mitochondrial quality control (PubMed:24949970).</text>
</comment>
<comment type="catalytic activity">
    <reaction>
        <text>S-ubiquitinyl-[E2 ubiquitin-conjugating enzyme]-L-cysteine + [acceptor protein]-L-lysine = [E2 ubiquitin-conjugating enzyme]-L-cysteine + N(6)-ubiquitinyl-[acceptor protein]-L-lysine.</text>
        <dbReference type="EC" id="2.3.2.27"/>
    </reaction>
</comment>
<comment type="pathway">
    <text>Protein modification; protein ubiquitination.</text>
</comment>
<comment type="subunit">
    <text evidence="1 4 5 6 7">Interacts with USP8, ERBB3, PRKN and BIRC6 (By similarity). Interacts with CSF2RB, EPOR, IL3RA, MYD88 and TBK1. Interacts with Clec16a (PubMed:24949970).</text>
</comment>
<comment type="interaction">
    <interactant intactId="EBI-7059583">
        <id>Q8BH75</id>
    </interactant>
    <interactant intactId="EBI-9696757">
        <id>Q80U30-2</id>
        <label>Clec16a</label>
    </interactant>
    <organismsDiffer>false</organismsDiffer>
    <experiments>3</experiments>
</comment>
<comment type="alternative products">
    <event type="alternative splicing"/>
    <isoform>
        <id>Q8BH75-1</id>
        <name>1</name>
        <sequence type="displayed"/>
    </isoform>
    <isoform>
        <id>Q8BH75-2</id>
        <name>2</name>
        <sequence type="described" ref="VSP_058649 VSP_058650"/>
    </isoform>
</comment>
<comment type="PTM">
    <text evidence="1">Autoubiquitinated. Autoubiquitination leads to proteasomal degradation. Deubiquitinated by USP8 to get stabilized which induces apoptosis.</text>
</comment>
<comment type="miscellaneous">
    <molecule>Isoform 2</molecule>
    <text evidence="9">May be produced at very low levels due to a premature stop codon in the mRNA, leading to nonsense-mediated mRNA decay.</text>
</comment>
<comment type="sequence caution" evidence="9">
    <conflict type="erroneous initiation">
        <sequence resource="EMBL-CDS" id="AAH19415"/>
    </conflict>
    <text>Truncated N-terminus.</text>
</comment>
<comment type="sequence caution" evidence="9">
    <conflict type="erroneous translation">
        <sequence resource="EMBL-CDS" id="BAC27496"/>
    </conflict>
    <text>Wrong choice of CDS.</text>
</comment>
<comment type="sequence caution" evidence="9">
    <conflict type="erroneous translation">
        <sequence resource="EMBL-CDS" id="BAC31779"/>
    </conflict>
    <text>Wrong choice of CDS.</text>
</comment>
<evidence type="ECO:0000250" key="1"/>
<evidence type="ECO:0000255" key="2">
    <source>
        <dbReference type="PROSITE-ProRule" id="PRU00175"/>
    </source>
</evidence>
<evidence type="ECO:0000255" key="3">
    <source>
        <dbReference type="PROSITE-ProRule" id="PRU00455"/>
    </source>
</evidence>
<evidence type="ECO:0000269" key="4">
    <source>
    </source>
</evidence>
<evidence type="ECO:0000269" key="5">
    <source>
    </source>
</evidence>
<evidence type="ECO:0000269" key="6">
    <source>
    </source>
</evidence>
<evidence type="ECO:0000269" key="7">
    <source>
    </source>
</evidence>
<evidence type="ECO:0000303" key="8">
    <source>
    </source>
</evidence>
<evidence type="ECO:0000305" key="9"/>
<evidence type="ECO:0007829" key="10">
    <source>
        <dbReference type="PDB" id="2OGB"/>
    </source>
</evidence>
<accession>Q8BH75</accession>
<accession>Q8BGJ2</accession>
<accession>Q8BMC9</accession>
<accession>Q8VEA2</accession>
<accession>Q9CRK6</accession>
<accession>Q9D568</accession>
<gene>
    <name type="primary">Rnf41</name>
    <name type="synonym">Flrf</name>
    <name type="synonym">Nrdp1</name>
</gene>
<reference key="1">
    <citation type="journal article" date="2005" name="Science">
        <title>The transcriptional landscape of the mammalian genome.</title>
        <authorList>
            <person name="Carninci P."/>
            <person name="Kasukawa T."/>
            <person name="Katayama S."/>
            <person name="Gough J."/>
            <person name="Frith M.C."/>
            <person name="Maeda N."/>
            <person name="Oyama R."/>
            <person name="Ravasi T."/>
            <person name="Lenhard B."/>
            <person name="Wells C."/>
            <person name="Kodzius R."/>
            <person name="Shimokawa K."/>
            <person name="Bajic V.B."/>
            <person name="Brenner S.E."/>
            <person name="Batalov S."/>
            <person name="Forrest A.R."/>
            <person name="Zavolan M."/>
            <person name="Davis M.J."/>
            <person name="Wilming L.G."/>
            <person name="Aidinis V."/>
            <person name="Allen J.E."/>
            <person name="Ambesi-Impiombato A."/>
            <person name="Apweiler R."/>
            <person name="Aturaliya R.N."/>
            <person name="Bailey T.L."/>
            <person name="Bansal M."/>
            <person name="Baxter L."/>
            <person name="Beisel K.W."/>
            <person name="Bersano T."/>
            <person name="Bono H."/>
            <person name="Chalk A.M."/>
            <person name="Chiu K.P."/>
            <person name="Choudhary V."/>
            <person name="Christoffels A."/>
            <person name="Clutterbuck D.R."/>
            <person name="Crowe M.L."/>
            <person name="Dalla E."/>
            <person name="Dalrymple B.P."/>
            <person name="de Bono B."/>
            <person name="Della Gatta G."/>
            <person name="di Bernardo D."/>
            <person name="Down T."/>
            <person name="Engstrom P."/>
            <person name="Fagiolini M."/>
            <person name="Faulkner G."/>
            <person name="Fletcher C.F."/>
            <person name="Fukushima T."/>
            <person name="Furuno M."/>
            <person name="Futaki S."/>
            <person name="Gariboldi M."/>
            <person name="Georgii-Hemming P."/>
            <person name="Gingeras T.R."/>
            <person name="Gojobori T."/>
            <person name="Green R.E."/>
            <person name="Gustincich S."/>
            <person name="Harbers M."/>
            <person name="Hayashi Y."/>
            <person name="Hensch T.K."/>
            <person name="Hirokawa N."/>
            <person name="Hill D."/>
            <person name="Huminiecki L."/>
            <person name="Iacono M."/>
            <person name="Ikeo K."/>
            <person name="Iwama A."/>
            <person name="Ishikawa T."/>
            <person name="Jakt M."/>
            <person name="Kanapin A."/>
            <person name="Katoh M."/>
            <person name="Kawasawa Y."/>
            <person name="Kelso J."/>
            <person name="Kitamura H."/>
            <person name="Kitano H."/>
            <person name="Kollias G."/>
            <person name="Krishnan S.P."/>
            <person name="Kruger A."/>
            <person name="Kummerfeld S.K."/>
            <person name="Kurochkin I.V."/>
            <person name="Lareau L.F."/>
            <person name="Lazarevic D."/>
            <person name="Lipovich L."/>
            <person name="Liu J."/>
            <person name="Liuni S."/>
            <person name="McWilliam S."/>
            <person name="Madan Babu M."/>
            <person name="Madera M."/>
            <person name="Marchionni L."/>
            <person name="Matsuda H."/>
            <person name="Matsuzawa S."/>
            <person name="Miki H."/>
            <person name="Mignone F."/>
            <person name="Miyake S."/>
            <person name="Morris K."/>
            <person name="Mottagui-Tabar S."/>
            <person name="Mulder N."/>
            <person name="Nakano N."/>
            <person name="Nakauchi H."/>
            <person name="Ng P."/>
            <person name="Nilsson R."/>
            <person name="Nishiguchi S."/>
            <person name="Nishikawa S."/>
            <person name="Nori F."/>
            <person name="Ohara O."/>
            <person name="Okazaki Y."/>
            <person name="Orlando V."/>
            <person name="Pang K.C."/>
            <person name="Pavan W.J."/>
            <person name="Pavesi G."/>
            <person name="Pesole G."/>
            <person name="Petrovsky N."/>
            <person name="Piazza S."/>
            <person name="Reed J."/>
            <person name="Reid J.F."/>
            <person name="Ring B.Z."/>
            <person name="Ringwald M."/>
            <person name="Rost B."/>
            <person name="Ruan Y."/>
            <person name="Salzberg S.L."/>
            <person name="Sandelin A."/>
            <person name="Schneider C."/>
            <person name="Schoenbach C."/>
            <person name="Sekiguchi K."/>
            <person name="Semple C.A."/>
            <person name="Seno S."/>
            <person name="Sessa L."/>
            <person name="Sheng Y."/>
            <person name="Shibata Y."/>
            <person name="Shimada H."/>
            <person name="Shimada K."/>
            <person name="Silva D."/>
            <person name="Sinclair B."/>
            <person name="Sperling S."/>
            <person name="Stupka E."/>
            <person name="Sugiura K."/>
            <person name="Sultana R."/>
            <person name="Takenaka Y."/>
            <person name="Taki K."/>
            <person name="Tammoja K."/>
            <person name="Tan S.L."/>
            <person name="Tang S."/>
            <person name="Taylor M.S."/>
            <person name="Tegner J."/>
            <person name="Teichmann S.A."/>
            <person name="Ueda H.R."/>
            <person name="van Nimwegen E."/>
            <person name="Verardo R."/>
            <person name="Wei C.L."/>
            <person name="Yagi K."/>
            <person name="Yamanishi H."/>
            <person name="Zabarovsky E."/>
            <person name="Zhu S."/>
            <person name="Zimmer A."/>
            <person name="Hide W."/>
            <person name="Bult C."/>
            <person name="Grimmond S.M."/>
            <person name="Teasdale R.D."/>
            <person name="Liu E.T."/>
            <person name="Brusic V."/>
            <person name="Quackenbush J."/>
            <person name="Wahlestedt C."/>
            <person name="Mattick J.S."/>
            <person name="Hume D.A."/>
            <person name="Kai C."/>
            <person name="Sasaki D."/>
            <person name="Tomaru Y."/>
            <person name="Fukuda S."/>
            <person name="Kanamori-Katayama M."/>
            <person name="Suzuki M."/>
            <person name="Aoki J."/>
            <person name="Arakawa T."/>
            <person name="Iida J."/>
            <person name="Imamura K."/>
            <person name="Itoh M."/>
            <person name="Kato T."/>
            <person name="Kawaji H."/>
            <person name="Kawagashira N."/>
            <person name="Kawashima T."/>
            <person name="Kojima M."/>
            <person name="Kondo S."/>
            <person name="Konno H."/>
            <person name="Nakano K."/>
            <person name="Ninomiya N."/>
            <person name="Nishio T."/>
            <person name="Okada M."/>
            <person name="Plessy C."/>
            <person name="Shibata K."/>
            <person name="Shiraki T."/>
            <person name="Suzuki S."/>
            <person name="Tagami M."/>
            <person name="Waki K."/>
            <person name="Watahiki A."/>
            <person name="Okamura-Oho Y."/>
            <person name="Suzuki H."/>
            <person name="Kawai J."/>
            <person name="Hayashizaki Y."/>
        </authorList>
    </citation>
    <scope>NUCLEOTIDE SEQUENCE [LARGE SCALE MRNA] (ISOFORMS 1 AND 2)</scope>
    <source>
        <strain>C57BL/6J</strain>
        <tissue>Brain cortex</tissue>
        <tissue>Embryo</tissue>
        <tissue>Pituitary</tissue>
        <tissue>Skin</tissue>
        <tissue>Testis</tissue>
        <tissue>Wolffian duct</tissue>
    </source>
</reference>
<reference key="2">
    <citation type="journal article" date="2004" name="Genome Res.">
        <title>The status, quality, and expansion of the NIH full-length cDNA project: the Mammalian Gene Collection (MGC).</title>
        <authorList>
            <consortium name="The MGC Project Team"/>
        </authorList>
    </citation>
    <scope>NUCLEOTIDE SEQUENCE [LARGE SCALE MRNA] (ISOFORM 1)</scope>
    <source>
        <strain>C57BL/6J</strain>
        <strain>Czech II</strain>
        <tissue>Brain</tissue>
        <tissue>Mammary tumor</tissue>
    </source>
</reference>
<reference key="3">
    <citation type="journal article" date="2008" name="Exp. Hematol.">
        <title>E3 ligase FLRF (Rnf41) regulates differentiation of hematopoietic progenitors by governing steady-state levels of cytokine and retinoic acid receptors.</title>
        <authorList>
            <person name="Jing X."/>
            <person name="Infante J."/>
            <person name="Nachtman R.G."/>
            <person name="Jurecic R."/>
        </authorList>
    </citation>
    <scope>FUNCTION</scope>
    <scope>INTERACTION WITH EPOR; IL3RA AND CSF2RB</scope>
</reference>
<reference key="4">
    <citation type="journal article" date="2009" name="Nat. Immunol.">
        <title>The E3 ubiquitin ligase Nrdp1 'preferentially' promotes TLR-mediated production of type I interferon.</title>
        <authorList>
            <person name="Wang C."/>
            <person name="Chen T."/>
            <person name="Zhang J."/>
            <person name="Yang M."/>
            <person name="Li N."/>
            <person name="Xu X."/>
            <person name="Cao X."/>
        </authorList>
    </citation>
    <scope>FUNCTION</scope>
    <scope>INTERACTION WITH MYD88 AND TBK1</scope>
</reference>
<reference key="5">
    <citation type="journal article" date="2014" name="Cell">
        <title>The diabetes susceptibility gene Clec16a regulates mitophagy.</title>
        <authorList>
            <person name="Soleimanpour S.A."/>
            <person name="Gupta A."/>
            <person name="Bakay M."/>
            <person name="Ferrari A.M."/>
            <person name="Groff D.N."/>
            <person name="Fadista J."/>
            <person name="Spruce L.A."/>
            <person name="Kushner J.A."/>
            <person name="Groop L."/>
            <person name="Seeholzer S.H."/>
            <person name="Kaufman B.A."/>
            <person name="Hakonarson H."/>
            <person name="Stoffers D.A."/>
        </authorList>
    </citation>
    <scope>FUNCTION IN MITOPHAGY</scope>
    <scope>INTERACTION WITH CLEC16A</scope>
</reference>
<reference key="6">
    <citation type="journal article" date="2007" name="Protein Sci.">
        <title>Structure-based mutagenesis of the substrate-recognition domain of Nrdp1/FLRF identifies the binding site for the receptor tyrosine kinase ErbB3.</title>
        <authorList>
            <person name="Bouyain S."/>
            <person name="Leahy D.J."/>
        </authorList>
    </citation>
    <scope>X-RAY CRYSTALLOGRAPHY (1.95 ANGSTROMS) OF 193-317</scope>
    <scope>INTERACTION WITH ERBB3</scope>
</reference>
<organism>
    <name type="scientific">Mus musculus</name>
    <name type="common">Mouse</name>
    <dbReference type="NCBI Taxonomy" id="10090"/>
    <lineage>
        <taxon>Eukaryota</taxon>
        <taxon>Metazoa</taxon>
        <taxon>Chordata</taxon>
        <taxon>Craniata</taxon>
        <taxon>Vertebrata</taxon>
        <taxon>Euteleostomi</taxon>
        <taxon>Mammalia</taxon>
        <taxon>Eutheria</taxon>
        <taxon>Euarchontoglires</taxon>
        <taxon>Glires</taxon>
        <taxon>Rodentia</taxon>
        <taxon>Myomorpha</taxon>
        <taxon>Muroidea</taxon>
        <taxon>Muridae</taxon>
        <taxon>Murinae</taxon>
        <taxon>Mus</taxon>
        <taxon>Mus</taxon>
    </lineage>
</organism>
<name>RNF41_MOUSE</name>
<proteinExistence type="evidence at protein level"/>
<keyword id="KW-0002">3D-structure</keyword>
<keyword id="KW-0025">Alternative splicing</keyword>
<keyword id="KW-0053">Apoptosis</keyword>
<keyword id="KW-0072">Autophagy</keyword>
<keyword id="KW-0479">Metal-binding</keyword>
<keyword id="KW-1185">Reference proteome</keyword>
<keyword id="KW-0808">Transferase</keyword>
<keyword id="KW-0832">Ubl conjugation</keyword>
<keyword id="KW-0833">Ubl conjugation pathway</keyword>
<keyword id="KW-0862">Zinc</keyword>
<keyword id="KW-0863">Zinc-finger</keyword>
<sequence>MGYDVTRFQGDVDEDLICPICSGVLEEPVQAPHCEHAFCNACITQWFSQQQTCPVDRSVVTVAHLRPVPRIMRNMLSKLQIACDNAVFGCSAVVRLDNLMSHLSDCEHNPKRPVTCEQGCGLEMPKDELPNHNCIKHLRSVVQQQQSRIAELEKTSAEHKHQLAEQKRDIQLLKAYMRAIRSVNPNLQNLEETIEYNEILEWVNSLQPARVTRWGGMISTPDAVLQAVIKRSLVESGCPASIVNELIENAHERSWPQGLATLETRQMNRRYYENYVAKRIPGKQAVVVMACENQHMGDDMVQEPGLVMIFAHGVEEI</sequence>